<comment type="function">
    <text evidence="1">NAD-binding protein involved in the addition of a carboxymethylaminomethyl (cmnm) group at the wobble position (U34) of certain tRNAs, forming tRNA-cmnm(5)s(2)U34.</text>
</comment>
<comment type="cofactor">
    <cofactor evidence="1">
        <name>FAD</name>
        <dbReference type="ChEBI" id="CHEBI:57692"/>
    </cofactor>
</comment>
<comment type="subunit">
    <text evidence="1">Homodimer. Heterotetramer of two MnmE and two MnmG subunits.</text>
</comment>
<comment type="subcellular location">
    <subcellularLocation>
        <location evidence="1">Cytoplasm</location>
    </subcellularLocation>
</comment>
<comment type="similarity">
    <text evidence="1">Belongs to the MnmG family.</text>
</comment>
<name>MNMG_RICAE</name>
<sequence length="622" mass="68829">MLKYDVIVIGGGHAGVEAAAASARLGVPTLLITLKPENLGEMSCNPAIGGIAKGTLVKEIDALDGLMGYVIDQAGIHYKMLNETRGPAVWGPRAQADRKLYKKAMYQILTNYPNLDILYGKVEDIEIKSSKIEAVILNNGSKILCQKIILTTGTFLSGLIHIGQKKIPAGRVDEEPSYGLSNTLKQIGFKLARLKTGTPPRIDGRTIDYSKTILQPGDKIPRPFSELTNIVNVSQINCFITKTTSETHDIIRENLDKSAMYSGQIEGIGPRYCPSIEDKIVRFSTKSEHRIFLEPEGLDDYTIYPNGISTSLPEDVQHKLIKTIPGLENVKVLRPGYAIEYDYVDPREISVTLETKKIAGLYLAGQINGTTGYEEAAGQGIIAGINAALAVKDQAPFMLTRANSYIGVMIDDLTTFGTIEPYRMFTSRSEYRLSLRADNSDLRLTELGMNIGVVSEKRKKIFTKKCEDIEKIKSLLNTLSLTTSKLAKMGIQVAQDGTYKTVLDLFKIPNFNVEQAIKIFPMLKETQNKNILQLLYIEAKYASYLTRQHADINLFQSEEAQFIPKNIDYFKIPSISLEIQEKLSSHKPTTIGVARRIPGITPAAITAIIIYLKTKYSDGSST</sequence>
<protein>
    <recommendedName>
        <fullName evidence="1">tRNA uridine 5-carboxymethylaminomethyl modification enzyme MnmG</fullName>
    </recommendedName>
    <alternativeName>
        <fullName evidence="1">Glucose-inhibited division protein A</fullName>
    </alternativeName>
</protein>
<evidence type="ECO:0000255" key="1">
    <source>
        <dbReference type="HAMAP-Rule" id="MF_00129"/>
    </source>
</evidence>
<keyword id="KW-0963">Cytoplasm</keyword>
<keyword id="KW-0274">FAD</keyword>
<keyword id="KW-0285">Flavoprotein</keyword>
<keyword id="KW-0520">NAD</keyword>
<keyword id="KW-0819">tRNA processing</keyword>
<proteinExistence type="inferred from homology"/>
<organism>
    <name type="scientific">Rickettsia africae (strain ESF-5)</name>
    <dbReference type="NCBI Taxonomy" id="347255"/>
    <lineage>
        <taxon>Bacteria</taxon>
        <taxon>Pseudomonadati</taxon>
        <taxon>Pseudomonadota</taxon>
        <taxon>Alphaproteobacteria</taxon>
        <taxon>Rickettsiales</taxon>
        <taxon>Rickettsiaceae</taxon>
        <taxon>Rickettsieae</taxon>
        <taxon>Rickettsia</taxon>
        <taxon>spotted fever group</taxon>
    </lineage>
</organism>
<feature type="chain" id="PRO_1000203166" description="tRNA uridine 5-carboxymethylaminomethyl modification enzyme MnmG">
    <location>
        <begin position="1"/>
        <end position="622"/>
    </location>
</feature>
<feature type="binding site" evidence="1">
    <location>
        <begin position="10"/>
        <end position="15"/>
    </location>
    <ligand>
        <name>FAD</name>
        <dbReference type="ChEBI" id="CHEBI:57692"/>
    </ligand>
</feature>
<feature type="binding site" evidence="1">
    <location>
        <position position="122"/>
    </location>
    <ligand>
        <name>FAD</name>
        <dbReference type="ChEBI" id="CHEBI:57692"/>
    </ligand>
</feature>
<feature type="binding site" evidence="1">
    <location>
        <position position="177"/>
    </location>
    <ligand>
        <name>FAD</name>
        <dbReference type="ChEBI" id="CHEBI:57692"/>
    </ligand>
</feature>
<feature type="binding site" evidence="1">
    <location>
        <begin position="269"/>
        <end position="283"/>
    </location>
    <ligand>
        <name>NAD(+)</name>
        <dbReference type="ChEBI" id="CHEBI:57540"/>
    </ligand>
</feature>
<feature type="binding site" evidence="1">
    <location>
        <position position="366"/>
    </location>
    <ligand>
        <name>FAD</name>
        <dbReference type="ChEBI" id="CHEBI:57692"/>
    </ligand>
</feature>
<reference key="1">
    <citation type="journal article" date="2009" name="BMC Genomics">
        <title>Analysis of the Rickettsia africae genome reveals that virulence acquisition in Rickettsia species may be explained by genome reduction.</title>
        <authorList>
            <person name="Fournier P.-E."/>
            <person name="El Karkouri K."/>
            <person name="Leroy Q."/>
            <person name="Robert C."/>
            <person name="Giumelli B."/>
            <person name="Renesto P."/>
            <person name="Socolovschi C."/>
            <person name="Parola P."/>
            <person name="Audic S."/>
            <person name="Raoult D."/>
        </authorList>
    </citation>
    <scope>NUCLEOTIDE SEQUENCE [LARGE SCALE GENOMIC DNA]</scope>
    <source>
        <strain>ESF-5</strain>
    </source>
</reference>
<accession>C3PM94</accession>
<gene>
    <name evidence="1" type="primary">mnmG</name>
    <name evidence="1" type="synonym">gidA</name>
    <name type="ordered locus">RAF_ORF0079</name>
</gene>
<dbReference type="EMBL" id="CP001612">
    <property type="protein sequence ID" value="ACP53054.1"/>
    <property type="molecule type" value="Genomic_DNA"/>
</dbReference>
<dbReference type="RefSeq" id="WP_012719354.1">
    <property type="nucleotide sequence ID" value="NC_012633.1"/>
</dbReference>
<dbReference type="SMR" id="C3PM94"/>
<dbReference type="KEGG" id="raf:RAF_ORF0079"/>
<dbReference type="HOGENOM" id="CLU_007831_2_2_5"/>
<dbReference type="Proteomes" id="UP000002305">
    <property type="component" value="Chromosome"/>
</dbReference>
<dbReference type="GO" id="GO:0005829">
    <property type="term" value="C:cytosol"/>
    <property type="evidence" value="ECO:0007669"/>
    <property type="project" value="TreeGrafter"/>
</dbReference>
<dbReference type="GO" id="GO:0050660">
    <property type="term" value="F:flavin adenine dinucleotide binding"/>
    <property type="evidence" value="ECO:0007669"/>
    <property type="project" value="UniProtKB-UniRule"/>
</dbReference>
<dbReference type="GO" id="GO:0030488">
    <property type="term" value="P:tRNA methylation"/>
    <property type="evidence" value="ECO:0007669"/>
    <property type="project" value="TreeGrafter"/>
</dbReference>
<dbReference type="GO" id="GO:0002098">
    <property type="term" value="P:tRNA wobble uridine modification"/>
    <property type="evidence" value="ECO:0007669"/>
    <property type="project" value="InterPro"/>
</dbReference>
<dbReference type="FunFam" id="3.50.50.60:FF:000082">
    <property type="entry name" value="protein MTO1 homolog, mitochondrial isoform X1"/>
    <property type="match status" value="1"/>
</dbReference>
<dbReference type="FunFam" id="1.10.150.570:FF:000001">
    <property type="entry name" value="tRNA uridine 5-carboxymethylaminomethyl modification enzyme MnmG"/>
    <property type="match status" value="1"/>
</dbReference>
<dbReference type="FunFam" id="3.50.50.60:FF:000002">
    <property type="entry name" value="tRNA uridine 5-carboxymethylaminomethyl modification enzyme MnmG"/>
    <property type="match status" value="1"/>
</dbReference>
<dbReference type="Gene3D" id="3.50.50.60">
    <property type="entry name" value="FAD/NAD(P)-binding domain"/>
    <property type="match status" value="2"/>
</dbReference>
<dbReference type="Gene3D" id="1.10.150.570">
    <property type="entry name" value="GidA associated domain, C-terminal subdomain"/>
    <property type="match status" value="1"/>
</dbReference>
<dbReference type="HAMAP" id="MF_00129">
    <property type="entry name" value="MnmG_GidA"/>
    <property type="match status" value="1"/>
</dbReference>
<dbReference type="InterPro" id="IPR036188">
    <property type="entry name" value="FAD/NAD-bd_sf"/>
</dbReference>
<dbReference type="InterPro" id="IPR049312">
    <property type="entry name" value="GIDA_C_N"/>
</dbReference>
<dbReference type="InterPro" id="IPR004416">
    <property type="entry name" value="MnmG"/>
</dbReference>
<dbReference type="InterPro" id="IPR002218">
    <property type="entry name" value="MnmG-rel"/>
</dbReference>
<dbReference type="InterPro" id="IPR020595">
    <property type="entry name" value="MnmG-rel_CS"/>
</dbReference>
<dbReference type="InterPro" id="IPR026904">
    <property type="entry name" value="MnmG_C"/>
</dbReference>
<dbReference type="InterPro" id="IPR047001">
    <property type="entry name" value="MnmG_C_subdom"/>
</dbReference>
<dbReference type="InterPro" id="IPR044920">
    <property type="entry name" value="MnmG_C_subdom_sf"/>
</dbReference>
<dbReference type="InterPro" id="IPR040131">
    <property type="entry name" value="MnmG_N"/>
</dbReference>
<dbReference type="NCBIfam" id="TIGR00136">
    <property type="entry name" value="mnmG_gidA"/>
    <property type="match status" value="1"/>
</dbReference>
<dbReference type="PANTHER" id="PTHR11806">
    <property type="entry name" value="GLUCOSE INHIBITED DIVISION PROTEIN A"/>
    <property type="match status" value="1"/>
</dbReference>
<dbReference type="PANTHER" id="PTHR11806:SF0">
    <property type="entry name" value="PROTEIN MTO1 HOMOLOG, MITOCHONDRIAL"/>
    <property type="match status" value="1"/>
</dbReference>
<dbReference type="Pfam" id="PF01134">
    <property type="entry name" value="GIDA"/>
    <property type="match status" value="1"/>
</dbReference>
<dbReference type="Pfam" id="PF21680">
    <property type="entry name" value="GIDA_C_1st"/>
    <property type="match status" value="1"/>
</dbReference>
<dbReference type="Pfam" id="PF13932">
    <property type="entry name" value="SAM_GIDA_C"/>
    <property type="match status" value="1"/>
</dbReference>
<dbReference type="PRINTS" id="PR00411">
    <property type="entry name" value="PNDRDTASEI"/>
</dbReference>
<dbReference type="SMART" id="SM01228">
    <property type="entry name" value="GIDA_assoc_3"/>
    <property type="match status" value="1"/>
</dbReference>
<dbReference type="SUPFAM" id="SSF51905">
    <property type="entry name" value="FAD/NAD(P)-binding domain"/>
    <property type="match status" value="1"/>
</dbReference>
<dbReference type="PROSITE" id="PS01280">
    <property type="entry name" value="GIDA_1"/>
    <property type="match status" value="1"/>
</dbReference>
<dbReference type="PROSITE" id="PS01281">
    <property type="entry name" value="GIDA_2"/>
    <property type="match status" value="1"/>
</dbReference>